<reference key="1">
    <citation type="submission" date="2004-12" db="EMBL/GenBank/DDBJ databases">
        <title>The genome sequence of Borrelia hermsii and Borrelia turicatae: comparative analysis of two agents of endemic N. America relapsing fever.</title>
        <authorList>
            <person name="Porcella S.F."/>
            <person name="Raffel S.J."/>
            <person name="Schrumpf M.E."/>
            <person name="Montgomery B."/>
            <person name="Smith T."/>
            <person name="Schwan T.G."/>
        </authorList>
    </citation>
    <scope>NUCLEOTIDE SEQUENCE [LARGE SCALE GENOMIC DNA]</scope>
    <source>
        <strain>HS1 / DAH</strain>
    </source>
</reference>
<keyword id="KW-0067">ATP-binding</keyword>
<keyword id="KW-0963">Cytoplasm</keyword>
<keyword id="KW-0238">DNA-binding</keyword>
<keyword id="KW-0413">Isomerase</keyword>
<keyword id="KW-0547">Nucleotide-binding</keyword>
<keyword id="KW-0799">Topoisomerase</keyword>
<organism>
    <name type="scientific">Borrelia hermsii (strain HS1 / DAH)</name>
    <dbReference type="NCBI Taxonomy" id="314723"/>
    <lineage>
        <taxon>Bacteria</taxon>
        <taxon>Pseudomonadati</taxon>
        <taxon>Spirochaetota</taxon>
        <taxon>Spirochaetia</taxon>
        <taxon>Spirochaetales</taxon>
        <taxon>Borreliaceae</taxon>
        <taxon>Borrelia</taxon>
    </lineage>
</organism>
<evidence type="ECO:0000255" key="1">
    <source>
        <dbReference type="HAMAP-Rule" id="MF_01897"/>
    </source>
</evidence>
<evidence type="ECO:0000255" key="2">
    <source>
        <dbReference type="PROSITE-ProRule" id="PRU01384"/>
    </source>
</evidence>
<comment type="function">
    <text evidence="1">A type II topoisomerase that negatively supercoils closed circular double-stranded (ds) DNA in an ATP-dependent manner to modulate DNA topology and maintain chromosomes in an underwound state. Negative supercoiling favors strand separation, and DNA replication, transcription, recombination and repair, all of which involve strand separation. Also able to catalyze the interconversion of other topological isomers of dsDNA rings, including catenanes and knotted rings. Type II topoisomerases break and join 2 DNA strands simultaneously in an ATP-dependent manner.</text>
</comment>
<comment type="catalytic activity">
    <reaction evidence="1">
        <text>ATP-dependent breakage, passage and rejoining of double-stranded DNA.</text>
        <dbReference type="EC" id="5.6.2.2"/>
    </reaction>
</comment>
<comment type="subunit">
    <text evidence="1">Heterotetramer, composed of two GyrA and two GyrB chains. In the heterotetramer, GyrA contains the active site tyrosine that forms a transient covalent intermediate with DNA, while GyrB binds cofactors and catalyzes ATP hydrolysis.</text>
</comment>
<comment type="subcellular location">
    <subcellularLocation>
        <location evidence="1">Cytoplasm</location>
    </subcellularLocation>
</comment>
<comment type="miscellaneous">
    <text evidence="1">Few gyrases are as efficient as E.coli at forming negative supercoils. Not all organisms have 2 type II topoisomerases; in organisms with a single type II topoisomerase this enzyme also has to decatenate newly replicated chromosomes.</text>
</comment>
<comment type="similarity">
    <text evidence="1">Belongs to the type II topoisomerase GyrA/ParC subunit family.</text>
</comment>
<name>GYRA_BORHD</name>
<feature type="chain" id="PRO_0000409821" description="DNA gyrase subunit A">
    <location>
        <begin position="1"/>
        <end position="810"/>
    </location>
</feature>
<feature type="domain" description="Topo IIA-type catalytic" evidence="2">
    <location>
        <begin position="36"/>
        <end position="502"/>
    </location>
</feature>
<feature type="short sequence motif" description="GyrA-box" evidence="1">
    <location>
        <begin position="529"/>
        <end position="535"/>
    </location>
</feature>
<feature type="active site" description="O-(5'-phospho-DNA)-tyrosine intermediate" evidence="1">
    <location>
        <position position="124"/>
    </location>
</feature>
<gene>
    <name evidence="1" type="primary">gyrA</name>
    <name type="ordered locus">BH0435</name>
</gene>
<protein>
    <recommendedName>
        <fullName evidence="1">DNA gyrase subunit A</fullName>
        <ecNumber evidence="1">5.6.2.2</ecNumber>
    </recommendedName>
</protein>
<proteinExistence type="inferred from homology"/>
<accession>B2S0D7</accession>
<dbReference type="EC" id="5.6.2.2" evidence="1"/>
<dbReference type="EMBL" id="CP000048">
    <property type="protein sequence ID" value="AAX16943.1"/>
    <property type="molecule type" value="Genomic_DNA"/>
</dbReference>
<dbReference type="RefSeq" id="WP_012422199.1">
    <property type="nucleotide sequence ID" value="NZ_CP073136.1"/>
</dbReference>
<dbReference type="SMR" id="B2S0D7"/>
<dbReference type="GeneID" id="71843246"/>
<dbReference type="KEGG" id="bhr:BH0435"/>
<dbReference type="HOGENOM" id="CLU_002977_4_1_12"/>
<dbReference type="Proteomes" id="UP000008834">
    <property type="component" value="Chromosome"/>
</dbReference>
<dbReference type="GO" id="GO:0005694">
    <property type="term" value="C:chromosome"/>
    <property type="evidence" value="ECO:0007669"/>
    <property type="project" value="InterPro"/>
</dbReference>
<dbReference type="GO" id="GO:0005737">
    <property type="term" value="C:cytoplasm"/>
    <property type="evidence" value="ECO:0007669"/>
    <property type="project" value="UniProtKB-SubCell"/>
</dbReference>
<dbReference type="GO" id="GO:0009330">
    <property type="term" value="C:DNA topoisomerase type II (double strand cut, ATP-hydrolyzing) complex"/>
    <property type="evidence" value="ECO:0007669"/>
    <property type="project" value="TreeGrafter"/>
</dbReference>
<dbReference type="GO" id="GO:0005524">
    <property type="term" value="F:ATP binding"/>
    <property type="evidence" value="ECO:0007669"/>
    <property type="project" value="UniProtKB-UniRule"/>
</dbReference>
<dbReference type="GO" id="GO:0003677">
    <property type="term" value="F:DNA binding"/>
    <property type="evidence" value="ECO:0007669"/>
    <property type="project" value="UniProtKB-UniRule"/>
</dbReference>
<dbReference type="GO" id="GO:0034335">
    <property type="term" value="F:DNA negative supercoiling activity"/>
    <property type="evidence" value="ECO:0007669"/>
    <property type="project" value="UniProtKB-ARBA"/>
</dbReference>
<dbReference type="GO" id="GO:0006265">
    <property type="term" value="P:DNA topological change"/>
    <property type="evidence" value="ECO:0007669"/>
    <property type="project" value="UniProtKB-UniRule"/>
</dbReference>
<dbReference type="GO" id="GO:0006261">
    <property type="term" value="P:DNA-templated DNA replication"/>
    <property type="evidence" value="ECO:0007669"/>
    <property type="project" value="UniProtKB-UniRule"/>
</dbReference>
<dbReference type="CDD" id="cd00187">
    <property type="entry name" value="TOP4c"/>
    <property type="match status" value="1"/>
</dbReference>
<dbReference type="FunFam" id="1.10.268.10:FF:000001">
    <property type="entry name" value="DNA gyrase subunit A"/>
    <property type="match status" value="1"/>
</dbReference>
<dbReference type="FunFam" id="3.30.1360.40:FF:000002">
    <property type="entry name" value="DNA gyrase subunit A"/>
    <property type="match status" value="1"/>
</dbReference>
<dbReference type="FunFam" id="3.90.199.10:FF:000001">
    <property type="entry name" value="DNA gyrase subunit A"/>
    <property type="match status" value="1"/>
</dbReference>
<dbReference type="Gene3D" id="3.30.1360.40">
    <property type="match status" value="1"/>
</dbReference>
<dbReference type="Gene3D" id="2.120.10.90">
    <property type="entry name" value="DNA gyrase/topoisomerase IV, subunit A, C-terminal"/>
    <property type="match status" value="1"/>
</dbReference>
<dbReference type="Gene3D" id="3.90.199.10">
    <property type="entry name" value="Topoisomerase II, domain 5"/>
    <property type="match status" value="1"/>
</dbReference>
<dbReference type="Gene3D" id="1.10.268.10">
    <property type="entry name" value="Topoisomerase, domain 3"/>
    <property type="match status" value="1"/>
</dbReference>
<dbReference type="HAMAP" id="MF_01897">
    <property type="entry name" value="GyrA"/>
    <property type="match status" value="1"/>
</dbReference>
<dbReference type="InterPro" id="IPR005743">
    <property type="entry name" value="GyrA"/>
</dbReference>
<dbReference type="InterPro" id="IPR006691">
    <property type="entry name" value="GyrA/parC_rep"/>
</dbReference>
<dbReference type="InterPro" id="IPR035516">
    <property type="entry name" value="Gyrase/topoIV_suA_C"/>
</dbReference>
<dbReference type="InterPro" id="IPR013760">
    <property type="entry name" value="Topo_IIA-like_dom_sf"/>
</dbReference>
<dbReference type="InterPro" id="IPR013758">
    <property type="entry name" value="Topo_IIA_A/C_ab"/>
</dbReference>
<dbReference type="InterPro" id="IPR013757">
    <property type="entry name" value="Topo_IIA_A_a_sf"/>
</dbReference>
<dbReference type="InterPro" id="IPR002205">
    <property type="entry name" value="Topo_IIA_dom_A"/>
</dbReference>
<dbReference type="InterPro" id="IPR050220">
    <property type="entry name" value="Type_II_DNA_Topoisomerases"/>
</dbReference>
<dbReference type="NCBIfam" id="TIGR01063">
    <property type="entry name" value="gyrA"/>
    <property type="match status" value="1"/>
</dbReference>
<dbReference type="NCBIfam" id="NF004043">
    <property type="entry name" value="PRK05560.1"/>
    <property type="match status" value="1"/>
</dbReference>
<dbReference type="NCBIfam" id="NF004044">
    <property type="entry name" value="PRK05561.1"/>
    <property type="match status" value="1"/>
</dbReference>
<dbReference type="PANTHER" id="PTHR43493:SF5">
    <property type="entry name" value="DNA GYRASE SUBUNIT A, CHLOROPLASTIC_MITOCHONDRIAL"/>
    <property type="match status" value="1"/>
</dbReference>
<dbReference type="PANTHER" id="PTHR43493">
    <property type="entry name" value="DNA GYRASE/TOPOISOMERASE SUBUNIT A"/>
    <property type="match status" value="1"/>
</dbReference>
<dbReference type="Pfam" id="PF03989">
    <property type="entry name" value="DNA_gyraseA_C"/>
    <property type="match status" value="6"/>
</dbReference>
<dbReference type="Pfam" id="PF00521">
    <property type="entry name" value="DNA_topoisoIV"/>
    <property type="match status" value="1"/>
</dbReference>
<dbReference type="SMART" id="SM00434">
    <property type="entry name" value="TOP4c"/>
    <property type="match status" value="1"/>
</dbReference>
<dbReference type="SUPFAM" id="SSF101904">
    <property type="entry name" value="GyrA/ParC C-terminal domain-like"/>
    <property type="match status" value="1"/>
</dbReference>
<dbReference type="SUPFAM" id="SSF56719">
    <property type="entry name" value="Type II DNA topoisomerase"/>
    <property type="match status" value="1"/>
</dbReference>
<dbReference type="PROSITE" id="PS52040">
    <property type="entry name" value="TOPO_IIA"/>
    <property type="match status" value="1"/>
</dbReference>
<sequence length="810" mass="91510">MVTEEDKEQILNIKIEDEVKTSYLNYAMSVIVSRALPDVRDGLKPVHRRILYSMHEMGLRADKAFKKAGRIVGDVLGKYHPHGDQSIYEALVRLAQDFSLRYPIVIGQGNFGSIDGDPPAAMRYTEARMARVAEELVRDIDKQTVDFRANYDDSLLEPEVLPAAFPFLLVNGSSGIAVGMATNMAPHNLKEICDAIVYMLDHDSVSVYDLIEIVKGPDFPTYAEIIYNESLIKAYTTGKGSVVIRARYHIEEKFEDHIAIIITQIPYAVNKSSLLMKIAFLIKEEKLEGVSDIRDESDREGIRIVLEIKKGFDPHVVMNLLYEYTELRKNFSINNLALVNGIPKQLNLKELISAFIEHRKEIVRRRVEFDLKRAREKAHILEGLNIALRNIDRVIEIIRFARLVKDAKECIIKEFNLSEIQANSILDMKLQKLTSIETEKLEEEFKILLALIKDYEDILNSPERVVNIVREEIINLSLKFGDERRTKIIYDEEVLKTSMSDLMQRENVIVILTKQGFIKRILQDEYKLQGIGGKGLGSFDLQDRDQVNITLCVNTHDFLFMISNEGKLYVINAYGIKDTSRTSKGQNVRELINLGETEEILAIKNCNELSVDNYLLITTANGKIARIETEGFKTVKARGVIVIKLDDNDFVTSAEIVSKNEKIICISKKGNAFAFNSDNIRLTHRGTQGVSGMKVREGDVLIKALAVKQGSHLLVVSENGYGKRLEISKVTDLKRGATGYTCYKKSDEKAGEVVDAITVVQDDEILLVSKGAKVLRTLVDKISEQGKDARGMQVLSLDEDKLISVSKFIK</sequence>